<accession>Q9QZY8</accession>
<organism>
    <name type="scientific">Cavia porcellus</name>
    <name type="common">Guinea pig</name>
    <dbReference type="NCBI Taxonomy" id="10141"/>
    <lineage>
        <taxon>Eukaryota</taxon>
        <taxon>Metazoa</taxon>
        <taxon>Chordata</taxon>
        <taxon>Craniata</taxon>
        <taxon>Vertebrata</taxon>
        <taxon>Euteleostomi</taxon>
        <taxon>Mammalia</taxon>
        <taxon>Eutheria</taxon>
        <taxon>Euarchontoglires</taxon>
        <taxon>Glires</taxon>
        <taxon>Rodentia</taxon>
        <taxon>Hystricomorpha</taxon>
        <taxon>Caviidae</taxon>
        <taxon>Cavia</taxon>
    </lineage>
</organism>
<gene>
    <name type="primary">CD1C1</name>
</gene>
<dbReference type="EMBL" id="AF145487">
    <property type="protein sequence ID" value="AAF12742.1"/>
    <property type="molecule type" value="mRNA"/>
</dbReference>
<dbReference type="RefSeq" id="NP_001166324.1">
    <property type="nucleotide sequence ID" value="NM_001172853.1"/>
</dbReference>
<dbReference type="SMR" id="Q9QZY8"/>
<dbReference type="STRING" id="10141.ENSCPOP00000006870"/>
<dbReference type="GlyCosmos" id="Q9QZY8">
    <property type="glycosylation" value="4 sites, No reported glycans"/>
</dbReference>
<dbReference type="GeneID" id="100379553"/>
<dbReference type="KEGG" id="cpoc:100379553"/>
<dbReference type="CTD" id="100379553"/>
<dbReference type="eggNOG" id="ENOG502SJH6">
    <property type="taxonomic scope" value="Eukaryota"/>
</dbReference>
<dbReference type="InParanoid" id="Q9QZY8"/>
<dbReference type="OrthoDB" id="8890485at2759"/>
<dbReference type="Proteomes" id="UP000005447">
    <property type="component" value="Unassembled WGS sequence"/>
</dbReference>
<dbReference type="GO" id="GO:0010008">
    <property type="term" value="C:endosome membrane"/>
    <property type="evidence" value="ECO:0007669"/>
    <property type="project" value="UniProtKB-SubCell"/>
</dbReference>
<dbReference type="GO" id="GO:0009897">
    <property type="term" value="C:external side of plasma membrane"/>
    <property type="evidence" value="ECO:0007669"/>
    <property type="project" value="TreeGrafter"/>
</dbReference>
<dbReference type="GO" id="GO:0005615">
    <property type="term" value="C:extracellular space"/>
    <property type="evidence" value="ECO:0007669"/>
    <property type="project" value="TreeGrafter"/>
</dbReference>
<dbReference type="GO" id="GO:0030883">
    <property type="term" value="F:endogenous lipid antigen binding"/>
    <property type="evidence" value="ECO:0007669"/>
    <property type="project" value="TreeGrafter"/>
</dbReference>
<dbReference type="GO" id="GO:0030884">
    <property type="term" value="F:exogenous lipid antigen binding"/>
    <property type="evidence" value="ECO:0007669"/>
    <property type="project" value="TreeGrafter"/>
</dbReference>
<dbReference type="GO" id="GO:0071723">
    <property type="term" value="F:lipopeptide binding"/>
    <property type="evidence" value="ECO:0007669"/>
    <property type="project" value="TreeGrafter"/>
</dbReference>
<dbReference type="GO" id="GO:0002250">
    <property type="term" value="P:adaptive immune response"/>
    <property type="evidence" value="ECO:0007669"/>
    <property type="project" value="UniProtKB-KW"/>
</dbReference>
<dbReference type="GO" id="GO:0048006">
    <property type="term" value="P:antigen processing and presentation, endogenous lipid antigen via MHC class Ib"/>
    <property type="evidence" value="ECO:0007669"/>
    <property type="project" value="TreeGrafter"/>
</dbReference>
<dbReference type="GO" id="GO:0048007">
    <property type="term" value="P:antigen processing and presentation, exogenous lipid antigen via MHC class Ib"/>
    <property type="evidence" value="ECO:0007669"/>
    <property type="project" value="TreeGrafter"/>
</dbReference>
<dbReference type="GO" id="GO:0001916">
    <property type="term" value="P:positive regulation of T cell mediated cytotoxicity"/>
    <property type="evidence" value="ECO:0007669"/>
    <property type="project" value="TreeGrafter"/>
</dbReference>
<dbReference type="CDD" id="cd21029">
    <property type="entry name" value="IgC1_CD1"/>
    <property type="match status" value="1"/>
</dbReference>
<dbReference type="FunFam" id="2.60.40.10:FF:000254">
    <property type="entry name" value="Antigen-presenting glycoprotein CD1d1"/>
    <property type="match status" value="1"/>
</dbReference>
<dbReference type="FunFam" id="3.30.500.10:FF:000002">
    <property type="entry name" value="Antigen-presenting glycoprotein CD1d1"/>
    <property type="match status" value="1"/>
</dbReference>
<dbReference type="Gene3D" id="2.60.40.10">
    <property type="entry name" value="Immunoglobulins"/>
    <property type="match status" value="1"/>
</dbReference>
<dbReference type="Gene3D" id="3.30.500.10">
    <property type="entry name" value="MHC class I-like antigen recognition-like"/>
    <property type="match status" value="1"/>
</dbReference>
<dbReference type="InterPro" id="IPR007110">
    <property type="entry name" value="Ig-like_dom"/>
</dbReference>
<dbReference type="InterPro" id="IPR036179">
    <property type="entry name" value="Ig-like_dom_sf"/>
</dbReference>
<dbReference type="InterPro" id="IPR013783">
    <property type="entry name" value="Ig-like_fold"/>
</dbReference>
<dbReference type="InterPro" id="IPR003597">
    <property type="entry name" value="Ig_C1-set"/>
</dbReference>
<dbReference type="InterPro" id="IPR050208">
    <property type="entry name" value="MHC_class-I_related"/>
</dbReference>
<dbReference type="InterPro" id="IPR011161">
    <property type="entry name" value="MHC_I-like_Ag-recog"/>
</dbReference>
<dbReference type="InterPro" id="IPR037055">
    <property type="entry name" value="MHC_I-like_Ag-recog_sf"/>
</dbReference>
<dbReference type="InterPro" id="IPR011162">
    <property type="entry name" value="MHC_I/II-like_Ag-recog"/>
</dbReference>
<dbReference type="PANTHER" id="PTHR16675">
    <property type="entry name" value="MHC CLASS I-RELATED"/>
    <property type="match status" value="1"/>
</dbReference>
<dbReference type="PANTHER" id="PTHR16675:SF155">
    <property type="entry name" value="T-CELL SURFACE GLYCOPROTEIN CD1C"/>
    <property type="match status" value="1"/>
</dbReference>
<dbReference type="Pfam" id="PF07654">
    <property type="entry name" value="C1-set"/>
    <property type="match status" value="1"/>
</dbReference>
<dbReference type="Pfam" id="PF16497">
    <property type="entry name" value="MHC_I_3"/>
    <property type="match status" value="1"/>
</dbReference>
<dbReference type="SMART" id="SM00407">
    <property type="entry name" value="IGc1"/>
    <property type="match status" value="1"/>
</dbReference>
<dbReference type="SUPFAM" id="SSF48726">
    <property type="entry name" value="Immunoglobulin"/>
    <property type="match status" value="1"/>
</dbReference>
<dbReference type="SUPFAM" id="SSF54452">
    <property type="entry name" value="MHC antigen-recognition domain"/>
    <property type="match status" value="1"/>
</dbReference>
<dbReference type="PROSITE" id="PS50835">
    <property type="entry name" value="IG_LIKE"/>
    <property type="match status" value="1"/>
</dbReference>
<keyword id="KW-1064">Adaptive immunity</keyword>
<keyword id="KW-1003">Cell membrane</keyword>
<keyword id="KW-1015">Disulfide bond</keyword>
<keyword id="KW-0967">Endosome</keyword>
<keyword id="KW-0325">Glycoprotein</keyword>
<keyword id="KW-0391">Immunity</keyword>
<keyword id="KW-0393">Immunoglobulin domain</keyword>
<keyword id="KW-0472">Membrane</keyword>
<keyword id="KW-1185">Reference proteome</keyword>
<keyword id="KW-0732">Signal</keyword>
<keyword id="KW-0812">Transmembrane</keyword>
<keyword id="KW-1133">Transmembrane helix</keyword>
<reference key="1">
    <citation type="journal article" date="1999" name="J. Immunol.">
        <title>Conservation of a CD1 multigene family in the guinea pig.</title>
        <authorList>
            <person name="Dascher C.C."/>
            <person name="Hiromatsu K."/>
            <person name="Naylor J.W."/>
            <person name="Brauer P.P."/>
            <person name="Brown K.A."/>
            <person name="Storey J.R."/>
            <person name="Behar S.M."/>
            <person name="Kawasaki E.S."/>
            <person name="Porcelli S.A."/>
            <person name="Brenner M.B."/>
            <person name="LeClair K.P."/>
        </authorList>
    </citation>
    <scope>NUCLEOTIDE SEQUENCE [MRNA]</scope>
    <source>
        <strain>Hartley</strain>
        <strain>NIH 2</strain>
        <tissue>Thymus</tissue>
    </source>
</reference>
<protein>
    <recommendedName>
        <fullName>T-cell surface glycoprotein CD1c1</fullName>
    </recommendedName>
    <cdAntigenName>CD1c-1</cdAntigenName>
</protein>
<evidence type="ECO:0000250" key="1"/>
<evidence type="ECO:0000255" key="2"/>
<evidence type="ECO:0000255" key="3">
    <source>
        <dbReference type="PROSITE-ProRule" id="PRU00114"/>
    </source>
</evidence>
<feature type="signal peptide" evidence="2">
    <location>
        <begin position="1"/>
        <end position="17"/>
    </location>
</feature>
<feature type="chain" id="PRO_0000014587" description="T-cell surface glycoprotein CD1c1">
    <location>
        <begin position="18"/>
        <end position="332"/>
    </location>
</feature>
<feature type="topological domain" description="Extracellular" evidence="2">
    <location>
        <begin position="18"/>
        <end position="300"/>
    </location>
</feature>
<feature type="transmembrane region" description="Helical" evidence="2">
    <location>
        <begin position="301"/>
        <end position="321"/>
    </location>
</feature>
<feature type="topological domain" description="Cytoplasmic" evidence="2">
    <location>
        <begin position="322"/>
        <end position="332"/>
    </location>
</feature>
<feature type="domain" description="Ig-like">
    <location>
        <begin position="205"/>
        <end position="292"/>
    </location>
</feature>
<feature type="glycosylation site" description="N-linked (GlcNAc...) asparagine" evidence="2">
    <location>
        <position position="25"/>
    </location>
</feature>
<feature type="glycosylation site" description="N-linked (GlcNAc...) asparagine" evidence="2">
    <location>
        <position position="38"/>
    </location>
</feature>
<feature type="glycosylation site" description="N-linked (GlcNAc...) asparagine" evidence="2">
    <location>
        <position position="75"/>
    </location>
</feature>
<feature type="glycosylation site" description="N-linked (GlcNAc...) asparagine" evidence="2">
    <location>
        <position position="146"/>
    </location>
</feature>
<feature type="disulfide bond" evidence="3">
    <location>
        <begin position="120"/>
        <end position="184"/>
    </location>
</feature>
<feature type="disulfide bond" evidence="3">
    <location>
        <begin position="224"/>
        <end position="279"/>
    </location>
</feature>
<sequence>MLFLHFLFLDVVLGGSITENVVQENISFYVMQISSYANKSWVQNHGSGWLDELQTHGWDSESDKIIFLHTWSRGNFSNEELEDLQLLFHAYFSGLALRIQHQPSQLEVKYPFEVQARAGCELHSGEHTKGFIHAAVNGLNFLSYQNKSLVPSPEGGTRAQKFCDLFNTYEGIRETVYYLIRDTCPRFLLGLLDAGKMDLQRQVRPEVWLSSSPNLEPGRLLLACHVSGFYPKPIWVMWMRGAQEQLETKQGDILPHADGTWYLRVTLDVAAREAAGLSCRVRHSSLRDQDIILYWGHGLSVILITFAVIVPLVLLIVLMLLYKKRCTYQGIQ</sequence>
<comment type="function">
    <text evidence="1">Antigen-presenting protein that binds self and non-self lipid and glycolipid antigens and presents them to T-cell receptors on natural killer T-cells.</text>
</comment>
<comment type="subunit">
    <text evidence="1">Heterodimer with B2M (beta-2-microglobulin).</text>
</comment>
<comment type="subcellular location">
    <subcellularLocation>
        <location evidence="1">Cell membrane</location>
        <topology evidence="1">Single-pass type I membrane protein</topology>
    </subcellularLocation>
    <subcellularLocation>
        <location evidence="1">Endosome membrane</location>
    </subcellularLocation>
    <text evidence="1">Subject to intracellular trafficking between the cell membrane and endosomes.</text>
</comment>
<comment type="miscellaneous">
    <text evidence="1">During protein synthesis and maturation, CD1 family members bind endogenous lipids that are replaced by lipid or glycolipid antigens when the proteins are internalized and pass through endosomes or lysosomes, before trafficking back to the cell surface.</text>
</comment>
<proteinExistence type="evidence at transcript level"/>
<name>CD1C1_CAVPO</name>